<dbReference type="EC" id="2.4.2.18" evidence="1"/>
<dbReference type="EMBL" id="CP000937">
    <property type="protein sequence ID" value="ABZ87060.1"/>
    <property type="molecule type" value="Genomic_DNA"/>
</dbReference>
<dbReference type="SMR" id="B0TWF2"/>
<dbReference type="KEGG" id="fph:Fphi_0837"/>
<dbReference type="eggNOG" id="COG0547">
    <property type="taxonomic scope" value="Bacteria"/>
</dbReference>
<dbReference type="HOGENOM" id="CLU_034315_3_0_6"/>
<dbReference type="UniPathway" id="UPA00035">
    <property type="reaction ID" value="UER00041"/>
</dbReference>
<dbReference type="GO" id="GO:0005829">
    <property type="term" value="C:cytosol"/>
    <property type="evidence" value="ECO:0007669"/>
    <property type="project" value="TreeGrafter"/>
</dbReference>
<dbReference type="GO" id="GO:0004048">
    <property type="term" value="F:anthranilate phosphoribosyltransferase activity"/>
    <property type="evidence" value="ECO:0007669"/>
    <property type="project" value="UniProtKB-UniRule"/>
</dbReference>
<dbReference type="GO" id="GO:0000287">
    <property type="term" value="F:magnesium ion binding"/>
    <property type="evidence" value="ECO:0007669"/>
    <property type="project" value="UniProtKB-UniRule"/>
</dbReference>
<dbReference type="GO" id="GO:0000162">
    <property type="term" value="P:L-tryptophan biosynthetic process"/>
    <property type="evidence" value="ECO:0007669"/>
    <property type="project" value="UniProtKB-UniRule"/>
</dbReference>
<dbReference type="FunFam" id="3.40.1030.10:FF:000002">
    <property type="entry name" value="Anthranilate phosphoribosyltransferase"/>
    <property type="match status" value="1"/>
</dbReference>
<dbReference type="Gene3D" id="3.40.1030.10">
    <property type="entry name" value="Nucleoside phosphorylase/phosphoribosyltransferase catalytic domain"/>
    <property type="match status" value="1"/>
</dbReference>
<dbReference type="Gene3D" id="1.20.970.10">
    <property type="entry name" value="Transferase, Pyrimidine Nucleoside Phosphorylase, Chain C"/>
    <property type="match status" value="1"/>
</dbReference>
<dbReference type="HAMAP" id="MF_00211">
    <property type="entry name" value="TrpD"/>
    <property type="match status" value="1"/>
</dbReference>
<dbReference type="InterPro" id="IPR005940">
    <property type="entry name" value="Anthranilate_Pribosyl_Tfrase"/>
</dbReference>
<dbReference type="InterPro" id="IPR000312">
    <property type="entry name" value="Glycosyl_Trfase_fam3"/>
</dbReference>
<dbReference type="InterPro" id="IPR017459">
    <property type="entry name" value="Glycosyl_Trfase_fam3_N_dom"/>
</dbReference>
<dbReference type="InterPro" id="IPR036320">
    <property type="entry name" value="Glycosyl_Trfase_fam3_N_dom_sf"/>
</dbReference>
<dbReference type="InterPro" id="IPR035902">
    <property type="entry name" value="Nuc_phospho_transferase"/>
</dbReference>
<dbReference type="NCBIfam" id="TIGR01245">
    <property type="entry name" value="trpD"/>
    <property type="match status" value="1"/>
</dbReference>
<dbReference type="PANTHER" id="PTHR43285">
    <property type="entry name" value="ANTHRANILATE PHOSPHORIBOSYLTRANSFERASE"/>
    <property type="match status" value="1"/>
</dbReference>
<dbReference type="PANTHER" id="PTHR43285:SF2">
    <property type="entry name" value="ANTHRANILATE PHOSPHORIBOSYLTRANSFERASE"/>
    <property type="match status" value="1"/>
</dbReference>
<dbReference type="Pfam" id="PF02885">
    <property type="entry name" value="Glycos_trans_3N"/>
    <property type="match status" value="1"/>
</dbReference>
<dbReference type="Pfam" id="PF00591">
    <property type="entry name" value="Glycos_transf_3"/>
    <property type="match status" value="1"/>
</dbReference>
<dbReference type="SUPFAM" id="SSF52418">
    <property type="entry name" value="Nucleoside phosphorylase/phosphoribosyltransferase catalytic domain"/>
    <property type="match status" value="1"/>
</dbReference>
<dbReference type="SUPFAM" id="SSF47648">
    <property type="entry name" value="Nucleoside phosphorylase/phosphoribosyltransferase N-terminal domain"/>
    <property type="match status" value="1"/>
</dbReference>
<reference key="1">
    <citation type="submission" date="2007-12" db="EMBL/GenBank/DDBJ databases">
        <title>Complete sequence of chromosome of Francisella philomiragia subsp. philomiragia ATCC 25017.</title>
        <authorList>
            <consortium name="US DOE Joint Genome Institute"/>
            <person name="Copeland A."/>
            <person name="Lucas S."/>
            <person name="Lapidus A."/>
            <person name="Barry K."/>
            <person name="Detter J.C."/>
            <person name="Glavina del Rio T."/>
            <person name="Hammon N."/>
            <person name="Israni S."/>
            <person name="Dalin E."/>
            <person name="Tice H."/>
            <person name="Pitluck S."/>
            <person name="Chain P."/>
            <person name="Malfatti S."/>
            <person name="Shin M."/>
            <person name="Vergez L."/>
            <person name="Schmutz J."/>
            <person name="Larimer F."/>
            <person name="Land M."/>
            <person name="Hauser L."/>
            <person name="Richardson P."/>
        </authorList>
    </citation>
    <scope>NUCLEOTIDE SEQUENCE [LARGE SCALE GENOMIC DNA]</scope>
    <source>
        <strain>ATCC 25017 / CCUG 19701 / FSC 153 / O#319-036</strain>
    </source>
</reference>
<proteinExistence type="inferred from homology"/>
<accession>B0TWF2</accession>
<protein>
    <recommendedName>
        <fullName evidence="1">Anthranilate phosphoribosyltransferase</fullName>
        <ecNumber evidence="1">2.4.2.18</ecNumber>
    </recommendedName>
</protein>
<keyword id="KW-0028">Amino-acid biosynthesis</keyword>
<keyword id="KW-0057">Aromatic amino acid biosynthesis</keyword>
<keyword id="KW-0328">Glycosyltransferase</keyword>
<keyword id="KW-0460">Magnesium</keyword>
<keyword id="KW-0479">Metal-binding</keyword>
<keyword id="KW-0808">Transferase</keyword>
<keyword id="KW-0822">Tryptophan biosynthesis</keyword>
<feature type="chain" id="PRO_1000078014" description="Anthranilate phosphoribosyltransferase">
    <location>
        <begin position="1"/>
        <end position="335"/>
    </location>
</feature>
<feature type="binding site" evidence="1">
    <location>
        <position position="82"/>
    </location>
    <ligand>
        <name>5-phospho-alpha-D-ribose 1-diphosphate</name>
        <dbReference type="ChEBI" id="CHEBI:58017"/>
    </ligand>
</feature>
<feature type="binding site" evidence="1">
    <location>
        <position position="82"/>
    </location>
    <ligand>
        <name>anthranilate</name>
        <dbReference type="ChEBI" id="CHEBI:16567"/>
        <label>1</label>
    </ligand>
</feature>
<feature type="binding site" evidence="1">
    <location>
        <begin position="85"/>
        <end position="86"/>
    </location>
    <ligand>
        <name>5-phospho-alpha-D-ribose 1-diphosphate</name>
        <dbReference type="ChEBI" id="CHEBI:58017"/>
    </ligand>
</feature>
<feature type="binding site" evidence="1">
    <location>
        <position position="90"/>
    </location>
    <ligand>
        <name>5-phospho-alpha-D-ribose 1-diphosphate</name>
        <dbReference type="ChEBI" id="CHEBI:58017"/>
    </ligand>
</feature>
<feature type="binding site" evidence="1">
    <location>
        <begin position="92"/>
        <end position="95"/>
    </location>
    <ligand>
        <name>5-phospho-alpha-D-ribose 1-diphosphate</name>
        <dbReference type="ChEBI" id="CHEBI:58017"/>
    </ligand>
</feature>
<feature type="binding site" evidence="1">
    <location>
        <position position="94"/>
    </location>
    <ligand>
        <name>Mg(2+)</name>
        <dbReference type="ChEBI" id="CHEBI:18420"/>
        <label>1</label>
    </ligand>
</feature>
<feature type="binding site" evidence="1">
    <location>
        <begin position="110"/>
        <end position="118"/>
    </location>
    <ligand>
        <name>5-phospho-alpha-D-ribose 1-diphosphate</name>
        <dbReference type="ChEBI" id="CHEBI:58017"/>
    </ligand>
</feature>
<feature type="binding site" evidence="1">
    <location>
        <position position="122"/>
    </location>
    <ligand>
        <name>5-phospho-alpha-D-ribose 1-diphosphate</name>
        <dbReference type="ChEBI" id="CHEBI:58017"/>
    </ligand>
</feature>
<feature type="binding site" evidence="1">
    <location>
        <position position="168"/>
    </location>
    <ligand>
        <name>anthranilate</name>
        <dbReference type="ChEBI" id="CHEBI:16567"/>
        <label>2</label>
    </ligand>
</feature>
<feature type="binding site" evidence="1">
    <location>
        <position position="226"/>
    </location>
    <ligand>
        <name>Mg(2+)</name>
        <dbReference type="ChEBI" id="CHEBI:18420"/>
        <label>2</label>
    </ligand>
</feature>
<feature type="binding site" evidence="1">
    <location>
        <position position="227"/>
    </location>
    <ligand>
        <name>Mg(2+)</name>
        <dbReference type="ChEBI" id="CHEBI:18420"/>
        <label>1</label>
    </ligand>
</feature>
<feature type="binding site" evidence="1">
    <location>
        <position position="227"/>
    </location>
    <ligand>
        <name>Mg(2+)</name>
        <dbReference type="ChEBI" id="CHEBI:18420"/>
        <label>2</label>
    </ligand>
</feature>
<organism>
    <name type="scientific">Francisella philomiragia subsp. philomiragia (strain ATCC 25017 / CCUG 19701 / FSC 153 / O#319-036)</name>
    <dbReference type="NCBI Taxonomy" id="484022"/>
    <lineage>
        <taxon>Bacteria</taxon>
        <taxon>Pseudomonadati</taxon>
        <taxon>Pseudomonadota</taxon>
        <taxon>Gammaproteobacteria</taxon>
        <taxon>Thiotrichales</taxon>
        <taxon>Francisellaceae</taxon>
        <taxon>Francisella</taxon>
    </lineage>
</organism>
<comment type="function">
    <text evidence="1">Catalyzes the transfer of the phosphoribosyl group of 5-phosphorylribose-1-pyrophosphate (PRPP) to anthranilate to yield N-(5'-phosphoribosyl)-anthranilate (PRA).</text>
</comment>
<comment type="catalytic activity">
    <reaction evidence="1">
        <text>N-(5-phospho-beta-D-ribosyl)anthranilate + diphosphate = 5-phospho-alpha-D-ribose 1-diphosphate + anthranilate</text>
        <dbReference type="Rhea" id="RHEA:11768"/>
        <dbReference type="ChEBI" id="CHEBI:16567"/>
        <dbReference type="ChEBI" id="CHEBI:18277"/>
        <dbReference type="ChEBI" id="CHEBI:33019"/>
        <dbReference type="ChEBI" id="CHEBI:58017"/>
        <dbReference type="EC" id="2.4.2.18"/>
    </reaction>
</comment>
<comment type="cofactor">
    <cofactor evidence="1">
        <name>Mg(2+)</name>
        <dbReference type="ChEBI" id="CHEBI:18420"/>
    </cofactor>
    <text evidence="1">Binds 2 magnesium ions per monomer.</text>
</comment>
<comment type="pathway">
    <text evidence="1">Amino-acid biosynthesis; L-tryptophan biosynthesis; L-tryptophan from chorismate: step 2/5.</text>
</comment>
<comment type="subunit">
    <text evidence="1">Homodimer.</text>
</comment>
<comment type="similarity">
    <text evidence="1">Belongs to the anthranilate phosphoribosyltransferase family.</text>
</comment>
<sequence>MISLRDIVEKLFNSEDLNYKESYQLFDYFIKGQIELPLQTSILIALKLKQETSTEIAAAVEALLDNTKEFPKINGDLAGIVGTGGDGFNTINISTTAAIVAAAAGYKVAKHGGRSVSSKSGSFDLLESFGVNIELSPQQTKECLELYNLGFLFAPFYSEGFRYIKEARTILKTRTIFNILGPLINPARPNKVVIGVYSKDLILPMAKTLINLGIDRAVVVYGSGLDEVAIHDDTYVAEIQNNQITEYKVSPVDFGIDTYAIKDLEGGLPEHNREIIKQILQGKGKQAHNAAVAVNVAMLMKLYGKDNLKQNTQEILELIKSGKCYQTLQNVISFG</sequence>
<evidence type="ECO:0000255" key="1">
    <source>
        <dbReference type="HAMAP-Rule" id="MF_00211"/>
    </source>
</evidence>
<name>TRPD_FRAP2</name>
<gene>
    <name evidence="1" type="primary">trpD</name>
    <name type="ordered locus">Fphi_0837</name>
</gene>